<accession>Q12VB0</accession>
<comment type="function">
    <text evidence="1">Catalyzes the CTP-dependent phosphorylation of riboflavin (vitamin B2) to form flavin mononucleotide (FMN).</text>
</comment>
<comment type="catalytic activity">
    <reaction>
        <text>riboflavin + CTP = CDP + FMN + H(+)</text>
        <dbReference type="Rhea" id="RHEA:25021"/>
        <dbReference type="ChEBI" id="CHEBI:15378"/>
        <dbReference type="ChEBI" id="CHEBI:37563"/>
        <dbReference type="ChEBI" id="CHEBI:57986"/>
        <dbReference type="ChEBI" id="CHEBI:58069"/>
        <dbReference type="ChEBI" id="CHEBI:58210"/>
        <dbReference type="EC" id="2.7.1.161"/>
    </reaction>
</comment>
<comment type="cofactor">
    <cofactor evidence="1">
        <name>Mg(2+)</name>
        <dbReference type="ChEBI" id="CHEBI:18420"/>
    </cofactor>
    <text evidence="1">Binds 1 Mg(2+) ion per subunit.</text>
</comment>
<comment type="pathway">
    <text>Cofactor biosynthesis; FMN biosynthesis; FMN from riboflavin (CTP route): step 1/1.</text>
</comment>
<comment type="similarity">
    <text evidence="2">Belongs to the archaeal riboflavin kinase family.</text>
</comment>
<keyword id="KW-0285">Flavoprotein</keyword>
<keyword id="KW-0288">FMN</keyword>
<keyword id="KW-0418">Kinase</keyword>
<keyword id="KW-0460">Magnesium</keyword>
<keyword id="KW-0479">Metal-binding</keyword>
<keyword id="KW-0547">Nucleotide-binding</keyword>
<keyword id="KW-0808">Transferase</keyword>
<protein>
    <recommendedName>
        <fullName>Riboflavin kinase</fullName>
        <shortName>RFK</shortName>
        <ecNumber>2.7.1.161</ecNumber>
    </recommendedName>
    <alternativeName>
        <fullName>CTP-dependent riboflavin kinase</fullName>
    </alternativeName>
    <alternativeName>
        <fullName>CTP:riboflavin 5'-phosphotransferase</fullName>
    </alternativeName>
    <alternativeName>
        <fullName>Flavokinase</fullName>
    </alternativeName>
</protein>
<gene>
    <name type="primary">ribK</name>
    <name type="ordered locus">Mbur_1724</name>
</gene>
<evidence type="ECO:0000250" key="1"/>
<evidence type="ECO:0000305" key="2"/>
<proteinExistence type="inferred from homology"/>
<sequence>MHRINALKHLALLGALKKPVKISSSEFTRYTSTGSKTAARILKQLEEEGSIDRLIIPEGQMISITEKGHKWLESEFSDYKHIFCGDEDKVELYGNVITGLGEGQYYIAQDGYGSQFEEKLGFKPYPGTLNVRLTSHSADILKRKSQKNIIPISGFTDGQRTFGGCNCYFVEVEGVRGAVVTPERSHYPHDLLEIISPVHLRKTLELNDGDEVKIMIEDRSACE</sequence>
<feature type="chain" id="PRO_0000322090" description="Riboflavin kinase">
    <location>
        <begin position="1"/>
        <end position="223"/>
    </location>
</feature>
<feature type="region of interest" description="Unknown">
    <location>
        <begin position="1"/>
        <end position="89"/>
    </location>
</feature>
<feature type="region of interest" description="Riboflavin kinase">
    <location>
        <begin position="90"/>
        <end position="223"/>
    </location>
</feature>
<feature type="binding site" evidence="1">
    <location>
        <begin position="99"/>
        <end position="104"/>
    </location>
    <ligand>
        <name>CDP</name>
        <dbReference type="ChEBI" id="CHEBI:58069"/>
    </ligand>
</feature>
<feature type="binding site" evidence="1">
    <location>
        <position position="128"/>
    </location>
    <ligand>
        <name>Mg(2+)</name>
        <dbReference type="ChEBI" id="CHEBI:18420"/>
    </ligand>
</feature>
<feature type="binding site" evidence="1">
    <location>
        <position position="130"/>
    </location>
    <ligand>
        <name>Mg(2+)</name>
        <dbReference type="ChEBI" id="CHEBI:18420"/>
    </ligand>
</feature>
<feature type="binding site" evidence="1">
    <location>
        <position position="185"/>
    </location>
    <ligand>
        <name>FMN</name>
        <dbReference type="ChEBI" id="CHEBI:58210"/>
    </ligand>
</feature>
<feature type="binding site" evidence="1">
    <location>
        <position position="193"/>
    </location>
    <ligand>
        <name>FMN</name>
        <dbReference type="ChEBI" id="CHEBI:58210"/>
    </ligand>
</feature>
<feature type="binding site" evidence="1">
    <location>
        <begin position="198"/>
        <end position="201"/>
    </location>
    <ligand>
        <name>CDP</name>
        <dbReference type="ChEBI" id="CHEBI:58069"/>
    </ligand>
</feature>
<reference key="1">
    <citation type="journal article" date="2009" name="ISME J.">
        <title>The genome sequence of the psychrophilic archaeon, Methanococcoides burtonii: the role of genome evolution in cold adaptation.</title>
        <authorList>
            <person name="Allen M.A."/>
            <person name="Lauro F.M."/>
            <person name="Williams T.J."/>
            <person name="Burg D."/>
            <person name="Siddiqui K.S."/>
            <person name="De Francisci D."/>
            <person name="Chong K.W."/>
            <person name="Pilak O."/>
            <person name="Chew H.H."/>
            <person name="De Maere M.Z."/>
            <person name="Ting L."/>
            <person name="Katrib M."/>
            <person name="Ng C."/>
            <person name="Sowers K.R."/>
            <person name="Galperin M.Y."/>
            <person name="Anderson I.J."/>
            <person name="Ivanova N."/>
            <person name="Dalin E."/>
            <person name="Martinez M."/>
            <person name="Lapidus A."/>
            <person name="Hauser L."/>
            <person name="Land M."/>
            <person name="Thomas T."/>
            <person name="Cavicchioli R."/>
        </authorList>
    </citation>
    <scope>NUCLEOTIDE SEQUENCE [LARGE SCALE GENOMIC DNA]</scope>
    <source>
        <strain>DSM 6242 / NBRC 107633 / OCM 468 / ACE-M</strain>
    </source>
</reference>
<dbReference type="EC" id="2.7.1.161"/>
<dbReference type="EMBL" id="CP000300">
    <property type="protein sequence ID" value="ABE52616.1"/>
    <property type="molecule type" value="Genomic_DNA"/>
</dbReference>
<dbReference type="RefSeq" id="WP_011499759.1">
    <property type="nucleotide sequence ID" value="NC_007955.1"/>
</dbReference>
<dbReference type="SMR" id="Q12VB0"/>
<dbReference type="STRING" id="259564.Mbur_1724"/>
<dbReference type="GeneID" id="3997399"/>
<dbReference type="KEGG" id="mbu:Mbur_1724"/>
<dbReference type="HOGENOM" id="CLU_088476_0_0_2"/>
<dbReference type="OrthoDB" id="30955at2157"/>
<dbReference type="UniPathway" id="UPA00276">
    <property type="reaction ID" value="UER00929"/>
</dbReference>
<dbReference type="Proteomes" id="UP000001979">
    <property type="component" value="Chromosome"/>
</dbReference>
<dbReference type="GO" id="GO:0000287">
    <property type="term" value="F:magnesium ion binding"/>
    <property type="evidence" value="ECO:0007669"/>
    <property type="project" value="UniProtKB-UniRule"/>
</dbReference>
<dbReference type="GO" id="GO:0000166">
    <property type="term" value="F:nucleotide binding"/>
    <property type="evidence" value="ECO:0007669"/>
    <property type="project" value="UniProtKB-UniRule"/>
</dbReference>
<dbReference type="GO" id="GO:0008531">
    <property type="term" value="F:riboflavin kinase activity"/>
    <property type="evidence" value="ECO:0007669"/>
    <property type="project" value="InterPro"/>
</dbReference>
<dbReference type="GO" id="GO:0009398">
    <property type="term" value="P:FMN biosynthetic process"/>
    <property type="evidence" value="ECO:0007669"/>
    <property type="project" value="UniProtKB-UniRule"/>
</dbReference>
<dbReference type="GO" id="GO:0009231">
    <property type="term" value="P:riboflavin biosynthetic process"/>
    <property type="evidence" value="ECO:0007669"/>
    <property type="project" value="InterPro"/>
</dbReference>
<dbReference type="Gene3D" id="2.40.30.30">
    <property type="entry name" value="Riboflavin kinase-like"/>
    <property type="match status" value="1"/>
</dbReference>
<dbReference type="Gene3D" id="1.10.10.10">
    <property type="entry name" value="Winged helix-like DNA-binding domain superfamily/Winged helix DNA-binding domain"/>
    <property type="match status" value="1"/>
</dbReference>
<dbReference type="HAMAP" id="MF_01285">
    <property type="entry name" value="Riboflavin_kinase"/>
    <property type="match status" value="1"/>
</dbReference>
<dbReference type="InterPro" id="IPR039063">
    <property type="entry name" value="RibK_CTP-dep"/>
</dbReference>
<dbReference type="InterPro" id="IPR023470">
    <property type="entry name" value="Riboflavin_kinase_archaeal"/>
</dbReference>
<dbReference type="InterPro" id="IPR023602">
    <property type="entry name" value="Riboflavin_kinase_CTP-dep"/>
</dbReference>
<dbReference type="InterPro" id="IPR023465">
    <property type="entry name" value="Riboflavin_kinase_dom_sf"/>
</dbReference>
<dbReference type="InterPro" id="IPR036388">
    <property type="entry name" value="WH-like_DNA-bd_sf"/>
</dbReference>
<dbReference type="InterPro" id="IPR036390">
    <property type="entry name" value="WH_DNA-bd_sf"/>
</dbReference>
<dbReference type="NCBIfam" id="NF010762">
    <property type="entry name" value="PRK14165.1"/>
    <property type="match status" value="1"/>
</dbReference>
<dbReference type="PANTHER" id="PTHR40706">
    <property type="entry name" value="RIBOFLAVIN KINASE"/>
    <property type="match status" value="1"/>
</dbReference>
<dbReference type="PANTHER" id="PTHR40706:SF1">
    <property type="entry name" value="RIBOFLAVIN KINASE"/>
    <property type="match status" value="1"/>
</dbReference>
<dbReference type="Pfam" id="PF01982">
    <property type="entry name" value="CTP-dep_RFKase"/>
    <property type="match status" value="1"/>
</dbReference>
<dbReference type="SUPFAM" id="SSF82114">
    <property type="entry name" value="Riboflavin kinase-like"/>
    <property type="match status" value="1"/>
</dbReference>
<dbReference type="SUPFAM" id="SSF46785">
    <property type="entry name" value="Winged helix' DNA-binding domain"/>
    <property type="match status" value="1"/>
</dbReference>
<name>RIFK_METBU</name>
<organism>
    <name type="scientific">Methanococcoides burtonii (strain DSM 6242 / NBRC 107633 / OCM 468 / ACE-M)</name>
    <dbReference type="NCBI Taxonomy" id="259564"/>
    <lineage>
        <taxon>Archaea</taxon>
        <taxon>Methanobacteriati</taxon>
        <taxon>Methanobacteriota</taxon>
        <taxon>Stenosarchaea group</taxon>
        <taxon>Methanomicrobia</taxon>
        <taxon>Methanosarcinales</taxon>
        <taxon>Methanosarcinaceae</taxon>
        <taxon>Methanococcoides</taxon>
    </lineage>
</organism>